<dbReference type="EC" id="2.1.1.199" evidence="1"/>
<dbReference type="EMBL" id="BA000040">
    <property type="protein sequence ID" value="BAC51875.1"/>
    <property type="status" value="ALT_INIT"/>
    <property type="molecule type" value="Genomic_DNA"/>
</dbReference>
<dbReference type="RefSeq" id="NP_773250.1">
    <property type="nucleotide sequence ID" value="NC_004463.1"/>
</dbReference>
<dbReference type="RefSeq" id="WP_038966431.1">
    <property type="nucleotide sequence ID" value="NC_004463.1"/>
</dbReference>
<dbReference type="SMR" id="Q89FT9"/>
<dbReference type="FunCoup" id="Q89FT9">
    <property type="interactions" value="679"/>
</dbReference>
<dbReference type="STRING" id="224911.AAV28_30630"/>
<dbReference type="EnsemblBacteria" id="BAC51875">
    <property type="protein sequence ID" value="BAC51875"/>
    <property type="gene ID" value="BAC51875"/>
</dbReference>
<dbReference type="GeneID" id="46493582"/>
<dbReference type="KEGG" id="bja:bll6610"/>
<dbReference type="PATRIC" id="fig|224911.44.peg.6622"/>
<dbReference type="eggNOG" id="COG0275">
    <property type="taxonomic scope" value="Bacteria"/>
</dbReference>
<dbReference type="HOGENOM" id="CLU_038422_1_0_5"/>
<dbReference type="InParanoid" id="Q89FT9"/>
<dbReference type="OrthoDB" id="9806637at2"/>
<dbReference type="Proteomes" id="UP000002526">
    <property type="component" value="Chromosome"/>
</dbReference>
<dbReference type="GO" id="GO:0005737">
    <property type="term" value="C:cytoplasm"/>
    <property type="evidence" value="ECO:0000318"/>
    <property type="project" value="GO_Central"/>
</dbReference>
<dbReference type="GO" id="GO:0071424">
    <property type="term" value="F:rRNA (cytosine-N4-)-methyltransferase activity"/>
    <property type="evidence" value="ECO:0000318"/>
    <property type="project" value="GO_Central"/>
</dbReference>
<dbReference type="GO" id="GO:0070475">
    <property type="term" value="P:rRNA base methylation"/>
    <property type="evidence" value="ECO:0000318"/>
    <property type="project" value="GO_Central"/>
</dbReference>
<dbReference type="FunFam" id="1.10.150.170:FF:000003">
    <property type="entry name" value="Ribosomal RNA small subunit methyltransferase H"/>
    <property type="match status" value="1"/>
</dbReference>
<dbReference type="Gene3D" id="1.10.150.170">
    <property type="entry name" value="Putative methyltransferase TM0872, insert domain"/>
    <property type="match status" value="1"/>
</dbReference>
<dbReference type="Gene3D" id="3.40.50.150">
    <property type="entry name" value="Vaccinia Virus protein VP39"/>
    <property type="match status" value="1"/>
</dbReference>
<dbReference type="HAMAP" id="MF_01007">
    <property type="entry name" value="16SrRNA_methyltr_H"/>
    <property type="match status" value="1"/>
</dbReference>
<dbReference type="InterPro" id="IPR002903">
    <property type="entry name" value="RsmH"/>
</dbReference>
<dbReference type="InterPro" id="IPR023397">
    <property type="entry name" value="SAM-dep_MeTrfase_MraW_recog"/>
</dbReference>
<dbReference type="InterPro" id="IPR029063">
    <property type="entry name" value="SAM-dependent_MTases_sf"/>
</dbReference>
<dbReference type="NCBIfam" id="TIGR00006">
    <property type="entry name" value="16S rRNA (cytosine(1402)-N(4))-methyltransferase RsmH"/>
    <property type="match status" value="1"/>
</dbReference>
<dbReference type="PANTHER" id="PTHR11265:SF0">
    <property type="entry name" value="12S RRNA N4-METHYLCYTIDINE METHYLTRANSFERASE"/>
    <property type="match status" value="1"/>
</dbReference>
<dbReference type="PANTHER" id="PTHR11265">
    <property type="entry name" value="S-ADENOSYL-METHYLTRANSFERASE MRAW"/>
    <property type="match status" value="1"/>
</dbReference>
<dbReference type="Pfam" id="PF01795">
    <property type="entry name" value="Methyltransf_5"/>
    <property type="match status" value="1"/>
</dbReference>
<dbReference type="PIRSF" id="PIRSF004486">
    <property type="entry name" value="MraW"/>
    <property type="match status" value="1"/>
</dbReference>
<dbReference type="SUPFAM" id="SSF81799">
    <property type="entry name" value="Putative methyltransferase TM0872, insert domain"/>
    <property type="match status" value="1"/>
</dbReference>
<dbReference type="SUPFAM" id="SSF53335">
    <property type="entry name" value="S-adenosyl-L-methionine-dependent methyltransferases"/>
    <property type="match status" value="1"/>
</dbReference>
<protein>
    <recommendedName>
        <fullName evidence="1">Ribosomal RNA small subunit methyltransferase H</fullName>
        <ecNumber evidence="1">2.1.1.199</ecNumber>
    </recommendedName>
    <alternativeName>
        <fullName evidence="1">16S rRNA m(4)C1402 methyltransferase</fullName>
    </alternativeName>
    <alternativeName>
        <fullName evidence="1">rRNA (cytosine-N(4)-)-methyltransferase RsmH</fullName>
    </alternativeName>
</protein>
<evidence type="ECO:0000255" key="1">
    <source>
        <dbReference type="HAMAP-Rule" id="MF_01007"/>
    </source>
</evidence>
<evidence type="ECO:0000256" key="2">
    <source>
        <dbReference type="SAM" id="MobiDB-lite"/>
    </source>
</evidence>
<evidence type="ECO:0000305" key="3"/>
<gene>
    <name evidence="1" type="primary">rsmH</name>
    <name type="synonym">mraW</name>
    <name type="ordered locus">bll6610</name>
</gene>
<comment type="function">
    <text evidence="1">Specifically methylates the N4 position of cytidine in position 1402 (C1402) of 16S rRNA.</text>
</comment>
<comment type="catalytic activity">
    <reaction evidence="1">
        <text>cytidine(1402) in 16S rRNA + S-adenosyl-L-methionine = N(4)-methylcytidine(1402) in 16S rRNA + S-adenosyl-L-homocysteine + H(+)</text>
        <dbReference type="Rhea" id="RHEA:42928"/>
        <dbReference type="Rhea" id="RHEA-COMP:10286"/>
        <dbReference type="Rhea" id="RHEA-COMP:10287"/>
        <dbReference type="ChEBI" id="CHEBI:15378"/>
        <dbReference type="ChEBI" id="CHEBI:57856"/>
        <dbReference type="ChEBI" id="CHEBI:59789"/>
        <dbReference type="ChEBI" id="CHEBI:74506"/>
        <dbReference type="ChEBI" id="CHEBI:82748"/>
        <dbReference type="EC" id="2.1.1.199"/>
    </reaction>
</comment>
<comment type="subcellular location">
    <subcellularLocation>
        <location evidence="1">Cytoplasm</location>
    </subcellularLocation>
</comment>
<comment type="similarity">
    <text evidence="1">Belongs to the methyltransferase superfamily. RsmH family.</text>
</comment>
<comment type="sequence caution" evidence="3">
    <conflict type="erroneous initiation">
        <sequence resource="EMBL-CDS" id="BAC51875"/>
    </conflict>
</comment>
<accession>Q89FT9</accession>
<keyword id="KW-0963">Cytoplasm</keyword>
<keyword id="KW-0489">Methyltransferase</keyword>
<keyword id="KW-1185">Reference proteome</keyword>
<keyword id="KW-0698">rRNA processing</keyword>
<keyword id="KW-0949">S-adenosyl-L-methionine</keyword>
<keyword id="KW-0808">Transferase</keyword>
<sequence length="329" mass="35347">MSSAPHIPVLGREAIDHLAPREGGIYVDATFGAGGYSRAILDVPGTRLIAIDRDRTAIAGGAELVERSAGRLTLVEDRFSHLADVCAAQGVDAVDGVVMDVGVSSMQLDQAGRGFSFRLDGPLDMRMGQAGPTAADVVARASEADLADIIYLLGEERHSRRVARAIVADRQETPFTTTRALADLVGRVVRSKPGDIHPATRTFQALRIFVNEELEELQTALTAAERVLKPGGRLVVVSFHSLEDRIVKNFLAERSKTGGGSRHLPEVAQTAPSFQLLTRRPVVAGEDEVAHNPRARSAKLRAAERTSAPAHKDDQSSSWPRLSDVMRGG</sequence>
<feature type="chain" id="PRO_0000108589" description="Ribosomal RNA small subunit methyltransferase H">
    <location>
        <begin position="1"/>
        <end position="329"/>
    </location>
</feature>
<feature type="region of interest" description="Disordered" evidence="2">
    <location>
        <begin position="285"/>
        <end position="329"/>
    </location>
</feature>
<feature type="binding site" evidence="1">
    <location>
        <begin position="34"/>
        <end position="36"/>
    </location>
    <ligand>
        <name>S-adenosyl-L-methionine</name>
        <dbReference type="ChEBI" id="CHEBI:59789"/>
    </ligand>
</feature>
<feature type="binding site" evidence="1">
    <location>
        <position position="52"/>
    </location>
    <ligand>
        <name>S-adenosyl-L-methionine</name>
        <dbReference type="ChEBI" id="CHEBI:59789"/>
    </ligand>
</feature>
<feature type="binding site" evidence="1">
    <location>
        <position position="79"/>
    </location>
    <ligand>
        <name>S-adenosyl-L-methionine</name>
        <dbReference type="ChEBI" id="CHEBI:59789"/>
    </ligand>
</feature>
<feature type="binding site" evidence="1">
    <location>
        <position position="100"/>
    </location>
    <ligand>
        <name>S-adenosyl-L-methionine</name>
        <dbReference type="ChEBI" id="CHEBI:59789"/>
    </ligand>
</feature>
<feature type="binding site" evidence="1">
    <location>
        <position position="107"/>
    </location>
    <ligand>
        <name>S-adenosyl-L-methionine</name>
        <dbReference type="ChEBI" id="CHEBI:59789"/>
    </ligand>
</feature>
<proteinExistence type="inferred from homology"/>
<organism>
    <name type="scientific">Bradyrhizobium diazoefficiens (strain JCM 10833 / BCRC 13528 / IAM 13628 / NBRC 14792 / USDA 110)</name>
    <dbReference type="NCBI Taxonomy" id="224911"/>
    <lineage>
        <taxon>Bacteria</taxon>
        <taxon>Pseudomonadati</taxon>
        <taxon>Pseudomonadota</taxon>
        <taxon>Alphaproteobacteria</taxon>
        <taxon>Hyphomicrobiales</taxon>
        <taxon>Nitrobacteraceae</taxon>
        <taxon>Bradyrhizobium</taxon>
    </lineage>
</organism>
<name>RSMH_BRADU</name>
<reference key="1">
    <citation type="journal article" date="2002" name="DNA Res.">
        <title>Complete genomic sequence of nitrogen-fixing symbiotic bacterium Bradyrhizobium japonicum USDA110.</title>
        <authorList>
            <person name="Kaneko T."/>
            <person name="Nakamura Y."/>
            <person name="Sato S."/>
            <person name="Minamisawa K."/>
            <person name="Uchiumi T."/>
            <person name="Sasamoto S."/>
            <person name="Watanabe A."/>
            <person name="Idesawa K."/>
            <person name="Iriguchi M."/>
            <person name="Kawashima K."/>
            <person name="Kohara M."/>
            <person name="Matsumoto M."/>
            <person name="Shimpo S."/>
            <person name="Tsuruoka H."/>
            <person name="Wada T."/>
            <person name="Yamada M."/>
            <person name="Tabata S."/>
        </authorList>
    </citation>
    <scope>NUCLEOTIDE SEQUENCE [LARGE SCALE GENOMIC DNA]</scope>
    <source>
        <strain>JCM 10833 / BCRC 13528 / IAM 13628 / NBRC 14792 / USDA 110</strain>
    </source>
</reference>